<protein>
    <recommendedName>
        <fullName evidence="1">Ribonuclease Z</fullName>
        <shortName evidence="1">RNase Z</shortName>
        <ecNumber evidence="1">3.1.26.11</ecNumber>
    </recommendedName>
    <alternativeName>
        <fullName evidence="1">tRNA 3 endonuclease</fullName>
    </alternativeName>
    <alternativeName>
        <fullName evidence="1">tRNase Z</fullName>
    </alternativeName>
</protein>
<name>RNZ_THEVO</name>
<organism>
    <name type="scientific">Thermoplasma volcanium (strain ATCC 51530 / DSM 4299 / JCM 9571 / NBRC 15438 / GSS1)</name>
    <dbReference type="NCBI Taxonomy" id="273116"/>
    <lineage>
        <taxon>Archaea</taxon>
        <taxon>Methanobacteriati</taxon>
        <taxon>Thermoplasmatota</taxon>
        <taxon>Thermoplasmata</taxon>
        <taxon>Thermoplasmatales</taxon>
        <taxon>Thermoplasmataceae</taxon>
        <taxon>Thermoplasma</taxon>
    </lineage>
</organism>
<proteinExistence type="inferred from homology"/>
<comment type="function">
    <text evidence="1">Zinc phosphodiesterase, which displays some tRNA 3'-processing endonuclease activity. Probably involved in tRNA maturation, by removing a 3'-trailer from precursor tRNA.</text>
</comment>
<comment type="catalytic activity">
    <reaction evidence="1">
        <text>Endonucleolytic cleavage of RNA, removing extra 3' nucleotides from tRNA precursor, generating 3' termini of tRNAs. A 3'-hydroxy group is left at the tRNA terminus and a 5'-phosphoryl group is left at the trailer molecule.</text>
        <dbReference type="EC" id="3.1.26.11"/>
    </reaction>
</comment>
<comment type="cofactor">
    <cofactor evidence="1">
        <name>Zn(2+)</name>
        <dbReference type="ChEBI" id="CHEBI:29105"/>
    </cofactor>
    <text evidence="1">Binds 2 Zn(2+) ions.</text>
</comment>
<comment type="subunit">
    <text evidence="1">Homodimer.</text>
</comment>
<comment type="similarity">
    <text evidence="1">Belongs to the RNase Z family.</text>
</comment>
<comment type="sequence caution" evidence="2">
    <conflict type="erroneous initiation">
        <sequence resource="EMBL-CDS" id="BAB60396"/>
    </conflict>
    <text>Extended N-terminus.</text>
</comment>
<feature type="chain" id="PRO_0000155940" description="Ribonuclease Z">
    <location>
        <begin position="1"/>
        <end position="304"/>
    </location>
</feature>
<feature type="active site" description="Proton acceptor" evidence="1">
    <location>
        <position position="68"/>
    </location>
</feature>
<feature type="binding site" evidence="1">
    <location>
        <position position="64"/>
    </location>
    <ligand>
        <name>Zn(2+)</name>
        <dbReference type="ChEBI" id="CHEBI:29105"/>
        <label>1</label>
        <note>catalytic</note>
    </ligand>
</feature>
<feature type="binding site" evidence="1">
    <location>
        <position position="66"/>
    </location>
    <ligand>
        <name>Zn(2+)</name>
        <dbReference type="ChEBI" id="CHEBI:29105"/>
        <label>1</label>
        <note>catalytic</note>
    </ligand>
</feature>
<feature type="binding site" evidence="1">
    <location>
        <position position="68"/>
    </location>
    <ligand>
        <name>Zn(2+)</name>
        <dbReference type="ChEBI" id="CHEBI:29105"/>
        <label>2</label>
        <note>catalytic</note>
    </ligand>
</feature>
<feature type="binding site" evidence="1">
    <location>
        <position position="69"/>
    </location>
    <ligand>
        <name>Zn(2+)</name>
        <dbReference type="ChEBI" id="CHEBI:29105"/>
        <label>2</label>
        <note>catalytic</note>
    </ligand>
</feature>
<feature type="binding site" evidence="1">
    <location>
        <position position="141"/>
    </location>
    <ligand>
        <name>Zn(2+)</name>
        <dbReference type="ChEBI" id="CHEBI:29105"/>
        <label>1</label>
        <note>catalytic</note>
    </ligand>
</feature>
<feature type="binding site" evidence="1">
    <location>
        <position position="209"/>
    </location>
    <ligand>
        <name>Zn(2+)</name>
        <dbReference type="ChEBI" id="CHEBI:29105"/>
        <label>1</label>
        <note>catalytic</note>
    </ligand>
</feature>
<feature type="binding site" evidence="1">
    <location>
        <position position="209"/>
    </location>
    <ligand>
        <name>Zn(2+)</name>
        <dbReference type="ChEBI" id="CHEBI:29105"/>
        <label>2</label>
        <note>catalytic</note>
    </ligand>
</feature>
<feature type="binding site" evidence="1">
    <location>
        <position position="267"/>
    </location>
    <ligand>
        <name>Zn(2+)</name>
        <dbReference type="ChEBI" id="CHEBI:29105"/>
        <label>2</label>
        <note>catalytic</note>
    </ligand>
</feature>
<keyword id="KW-0255">Endonuclease</keyword>
<keyword id="KW-0378">Hydrolase</keyword>
<keyword id="KW-0479">Metal-binding</keyword>
<keyword id="KW-0540">Nuclease</keyword>
<keyword id="KW-0819">tRNA processing</keyword>
<keyword id="KW-0862">Zinc</keyword>
<accession>Q979A8</accession>
<sequence length="304" mass="34316">MASNIKIVFFGTGGSWPTPIRAMPGVGIQIDDVFNLFDCGEGTQKQIMKSKWSFMSIDNIFITHFHGDHFLGLIGLVQSMSFNNRTKDLNIFGPRGAIGIISNAINIGYYTLRFRINVYELEPDKTYDLGKFLLKTTLNDHPVPALSYTIEEKDIIRVDPQKAKELGIPSKIIEKIRDNGTYEYRGRKYSIDEISGGIRKGRKIVYTGDTKPMQKMADFAKHADVLIHDTTTDSSFEPAVNQFGHSSAKQAARIARDAGVSRLFLYHYSPRITDVSPLVDDARAEFQESYASEDLMEYEVKVKH</sequence>
<dbReference type="EC" id="3.1.26.11" evidence="1"/>
<dbReference type="EMBL" id="BA000011">
    <property type="protein sequence ID" value="BAB60396.1"/>
    <property type="status" value="ALT_INIT"/>
    <property type="molecule type" value="Genomic_DNA"/>
</dbReference>
<dbReference type="RefSeq" id="WP_010917488.1">
    <property type="nucleotide sequence ID" value="NC_002689.2"/>
</dbReference>
<dbReference type="SMR" id="Q979A8"/>
<dbReference type="STRING" id="273116.gene:9382059"/>
<dbReference type="PaxDb" id="273116-14325492"/>
<dbReference type="GeneID" id="1441370"/>
<dbReference type="KEGG" id="tvo:TVG1292892"/>
<dbReference type="eggNOG" id="arCOG00501">
    <property type="taxonomic scope" value="Archaea"/>
</dbReference>
<dbReference type="HOGENOM" id="CLU_031317_2_1_2"/>
<dbReference type="OrthoDB" id="85118at2157"/>
<dbReference type="PhylomeDB" id="Q979A8"/>
<dbReference type="Proteomes" id="UP000001017">
    <property type="component" value="Chromosome"/>
</dbReference>
<dbReference type="GO" id="GO:0042781">
    <property type="term" value="F:3'-tRNA processing endoribonuclease activity"/>
    <property type="evidence" value="ECO:0007669"/>
    <property type="project" value="UniProtKB-UniRule"/>
</dbReference>
<dbReference type="GO" id="GO:0008270">
    <property type="term" value="F:zinc ion binding"/>
    <property type="evidence" value="ECO:0007669"/>
    <property type="project" value="UniProtKB-UniRule"/>
</dbReference>
<dbReference type="CDD" id="cd07717">
    <property type="entry name" value="RNaseZ_ZiPD-like_MBL-fold"/>
    <property type="match status" value="1"/>
</dbReference>
<dbReference type="Gene3D" id="3.60.15.10">
    <property type="entry name" value="Ribonuclease Z/Hydroxyacylglutathione hydrolase-like"/>
    <property type="match status" value="1"/>
</dbReference>
<dbReference type="HAMAP" id="MF_01818">
    <property type="entry name" value="RNase_Z_BN"/>
    <property type="match status" value="1"/>
</dbReference>
<dbReference type="InterPro" id="IPR001279">
    <property type="entry name" value="Metallo-B-lactamas"/>
</dbReference>
<dbReference type="InterPro" id="IPR036866">
    <property type="entry name" value="RibonucZ/Hydroxyglut_hydro"/>
</dbReference>
<dbReference type="InterPro" id="IPR013471">
    <property type="entry name" value="RNase_Z/BN"/>
</dbReference>
<dbReference type="NCBIfam" id="NF000801">
    <property type="entry name" value="PRK00055.1-3"/>
    <property type="match status" value="1"/>
</dbReference>
<dbReference type="NCBIfam" id="TIGR02651">
    <property type="entry name" value="RNase_Z"/>
    <property type="match status" value="1"/>
</dbReference>
<dbReference type="PANTHER" id="PTHR46018">
    <property type="entry name" value="ZINC PHOSPHODIESTERASE ELAC PROTEIN 1"/>
    <property type="match status" value="1"/>
</dbReference>
<dbReference type="PANTHER" id="PTHR46018:SF2">
    <property type="entry name" value="ZINC PHOSPHODIESTERASE ELAC PROTEIN 1"/>
    <property type="match status" value="1"/>
</dbReference>
<dbReference type="Pfam" id="PF12706">
    <property type="entry name" value="Lactamase_B_2"/>
    <property type="match status" value="2"/>
</dbReference>
<dbReference type="SUPFAM" id="SSF56281">
    <property type="entry name" value="Metallo-hydrolase/oxidoreductase"/>
    <property type="match status" value="1"/>
</dbReference>
<reference key="1">
    <citation type="journal article" date="2000" name="Proc. Natl. Acad. Sci. U.S.A.">
        <title>Archaeal adaptation to higher temperatures revealed by genomic sequence of Thermoplasma volcanium.</title>
        <authorList>
            <person name="Kawashima T."/>
            <person name="Amano N."/>
            <person name="Koike H."/>
            <person name="Makino S."/>
            <person name="Higuchi S."/>
            <person name="Kawashima-Ohya Y."/>
            <person name="Watanabe K."/>
            <person name="Yamazaki M."/>
            <person name="Kanehori K."/>
            <person name="Kawamoto T."/>
            <person name="Nunoshiba T."/>
            <person name="Yamamoto Y."/>
            <person name="Aramaki H."/>
            <person name="Makino K."/>
            <person name="Suzuki M."/>
        </authorList>
    </citation>
    <scope>NUCLEOTIDE SEQUENCE [LARGE SCALE GENOMIC DNA]</scope>
    <source>
        <strain>ATCC 51530 / DSM 4299 / JCM 9571 / NBRC 15438 / GSS1</strain>
    </source>
</reference>
<gene>
    <name evidence="1" type="primary">rnz</name>
    <name type="ordered locus">TV1254</name>
    <name type="ORF">TVG1292892</name>
</gene>
<evidence type="ECO:0000255" key="1">
    <source>
        <dbReference type="HAMAP-Rule" id="MF_01818"/>
    </source>
</evidence>
<evidence type="ECO:0000305" key="2"/>